<gene>
    <name type="ordered locus">RMA_0160</name>
</gene>
<dbReference type="EMBL" id="CP000683">
    <property type="protein sequence ID" value="ABV84454.1"/>
    <property type="molecule type" value="Genomic_DNA"/>
</dbReference>
<dbReference type="RefSeq" id="WP_004996682.1">
    <property type="nucleotide sequence ID" value="NC_009900.1"/>
</dbReference>
<dbReference type="SMR" id="A8F0L8"/>
<dbReference type="KEGG" id="rms:RMA_0160"/>
<dbReference type="HOGENOM" id="CLU_158651_4_0_5"/>
<dbReference type="Proteomes" id="UP000001311">
    <property type="component" value="Chromosome"/>
</dbReference>
<dbReference type="GO" id="GO:0003677">
    <property type="term" value="F:DNA binding"/>
    <property type="evidence" value="ECO:0007669"/>
    <property type="project" value="InterPro"/>
</dbReference>
<dbReference type="HAMAP" id="MF_00797">
    <property type="entry name" value="UPF0335"/>
    <property type="match status" value="1"/>
</dbReference>
<dbReference type="InterPro" id="IPR018753">
    <property type="entry name" value="GapR-like"/>
</dbReference>
<dbReference type="InterPro" id="IPR046367">
    <property type="entry name" value="GapR-like_DNA-bd"/>
</dbReference>
<dbReference type="NCBIfam" id="NF010247">
    <property type="entry name" value="PRK13694.1"/>
    <property type="match status" value="1"/>
</dbReference>
<dbReference type="Pfam" id="PF10073">
    <property type="entry name" value="GapR_DNA-bd"/>
    <property type="match status" value="1"/>
</dbReference>
<proteinExistence type="inferred from homology"/>
<reference key="1">
    <citation type="journal article" date="2007" name="Genome Res.">
        <title>Lateral gene transfer between obligate intracellular bacteria: evidence from the Rickettsia massiliae genome.</title>
        <authorList>
            <person name="Blanc G."/>
            <person name="Ogata H."/>
            <person name="Robert C."/>
            <person name="Audic S."/>
            <person name="Claverie J.-M."/>
            <person name="Raoult D."/>
        </authorList>
    </citation>
    <scope>NUCLEOTIDE SEQUENCE [LARGE SCALE GENOMIC DNA]</scope>
    <source>
        <strain>Mtu5</strain>
    </source>
</reference>
<evidence type="ECO:0000255" key="1">
    <source>
        <dbReference type="HAMAP-Rule" id="MF_00797"/>
    </source>
</evidence>
<feature type="chain" id="PRO_1000062260" description="UPF0335 protein RMA_0160">
    <location>
        <begin position="1"/>
        <end position="78"/>
    </location>
</feature>
<comment type="similarity">
    <text evidence="1">Belongs to the UPF0335 family.</text>
</comment>
<name>Y160_RICM5</name>
<accession>A8F0L8</accession>
<protein>
    <recommendedName>
        <fullName evidence="1">UPF0335 protein RMA_0160</fullName>
    </recommendedName>
</protein>
<organism>
    <name type="scientific">Rickettsia massiliae (strain Mtu5)</name>
    <dbReference type="NCBI Taxonomy" id="416276"/>
    <lineage>
        <taxon>Bacteria</taxon>
        <taxon>Pseudomonadati</taxon>
        <taxon>Pseudomonadota</taxon>
        <taxon>Alphaproteobacteria</taxon>
        <taxon>Rickettsiales</taxon>
        <taxon>Rickettsiaceae</taxon>
        <taxon>Rickettsieae</taxon>
        <taxon>Rickettsia</taxon>
        <taxon>spotted fever group</taxon>
    </lineage>
</organism>
<sequence length="78" mass="9029">MSEVVVKEQLEQYISKIERLEQEKADLSQEVKDIFQDASSHGFDVKAMKSILKLKKLDKDKLAEQDAMLELYRDTLGI</sequence>